<comment type="function">
    <text evidence="1">Component of the endoplasmic reticulum-associated protein degradation (ERAD) pathway. Recruits the soluble ubiquitin-conjugating enzyme UBC7 to the cytoplasmic face of the endoplasmic reticulum membrane where it functions in degradation of misfolded or regulated proteins localized in the endoplasmic reticulum (ER) lumen or membrane via the ubiquitin-proteasome system. Targets the E2 conjugating enzyme UBC7 to the DOA10 ubiquitin ligase complex, which is part of the ERAD-C pathway responsible for the rapid degradation of membrane proteins with misfolded cytoplasmic domains, and to the HRD1 ubiquitin ligase complex, which is part of the ERAD-L and ERAD-M pathways responsible for the rapid degradation of soluble lumenal and membrane proteins with misfolded lumenal domains (ERAD-L), or ER-membrane proteins with misfolded transmembrane domains (ERAD-M) (By similarity).</text>
</comment>
<comment type="subunit">
    <text evidence="1">Forms a heterodimer with UBC7.</text>
</comment>
<comment type="subcellular location">
    <subcellularLocation>
        <location evidence="4">Endoplasmic reticulum membrane</location>
        <topology evidence="1">Single-pass membrane protein</topology>
    </subcellularLocation>
</comment>
<comment type="similarity">
    <text evidence="6">Belongs to the CUE1 family.</text>
</comment>
<keyword id="KW-0256">Endoplasmic reticulum</keyword>
<keyword id="KW-0472">Membrane</keyword>
<keyword id="KW-1185">Reference proteome</keyword>
<keyword id="KW-0812">Transmembrane</keyword>
<keyword id="KW-1133">Transmembrane helix</keyword>
<keyword id="KW-0833">Ubl conjugation pathway</keyword>
<proteinExistence type="inferred from homology"/>
<protein>
    <recommendedName>
        <fullName>Coupling of ubiquitin conjugation to ER degradation protein 1</fullName>
    </recommendedName>
</protein>
<feature type="chain" id="PRO_0000280670" description="Coupling of ubiquitin conjugation to ER degradation protein 1">
    <location>
        <begin position="1"/>
        <end position="189"/>
    </location>
</feature>
<feature type="topological domain" description="Lumenal" evidence="1">
    <location>
        <begin position="1"/>
        <end position="5"/>
    </location>
</feature>
<feature type="transmembrane region" description="Helical" evidence="2">
    <location>
        <begin position="6"/>
        <end position="26"/>
    </location>
</feature>
<feature type="topological domain" description="Cytoplasmic" evidence="1">
    <location>
        <begin position="27"/>
        <end position="189"/>
    </location>
</feature>
<feature type="domain" description="CUE" evidence="3">
    <location>
        <begin position="72"/>
        <end position="114"/>
    </location>
</feature>
<feature type="region of interest" description="Disordered" evidence="5">
    <location>
        <begin position="38"/>
        <end position="73"/>
    </location>
</feature>
<feature type="region of interest" description="Disordered" evidence="5">
    <location>
        <begin position="117"/>
        <end position="138"/>
    </location>
</feature>
<feature type="compositionally biased region" description="Pro residues" evidence="5">
    <location>
        <begin position="117"/>
        <end position="131"/>
    </location>
</feature>
<reference key="1">
    <citation type="journal article" date="2004" name="Proc. Natl. Acad. Sci. U.S.A.">
        <title>The diploid genome sequence of Candida albicans.</title>
        <authorList>
            <person name="Jones T."/>
            <person name="Federspiel N.A."/>
            <person name="Chibana H."/>
            <person name="Dungan J."/>
            <person name="Kalman S."/>
            <person name="Magee B.B."/>
            <person name="Newport G."/>
            <person name="Thorstenson Y.R."/>
            <person name="Agabian N."/>
            <person name="Magee P.T."/>
            <person name="Davis R.W."/>
            <person name="Scherer S."/>
        </authorList>
    </citation>
    <scope>NUCLEOTIDE SEQUENCE [LARGE SCALE GENOMIC DNA]</scope>
    <source>
        <strain>SC5314 / ATCC MYA-2876</strain>
    </source>
</reference>
<reference key="2">
    <citation type="journal article" date="2007" name="Genome Biol.">
        <title>Assembly of the Candida albicans genome into sixteen supercontigs aligned on the eight chromosomes.</title>
        <authorList>
            <person name="van het Hoog M."/>
            <person name="Rast T.J."/>
            <person name="Martchenko M."/>
            <person name="Grindle S."/>
            <person name="Dignard D."/>
            <person name="Hogues H."/>
            <person name="Cuomo C."/>
            <person name="Berriman M."/>
            <person name="Scherer S."/>
            <person name="Magee B.B."/>
            <person name="Whiteway M."/>
            <person name="Chibana H."/>
            <person name="Nantel A."/>
            <person name="Magee P.T."/>
        </authorList>
    </citation>
    <scope>GENOME REANNOTATION</scope>
    <source>
        <strain>SC5314 / ATCC MYA-2876</strain>
    </source>
</reference>
<reference key="3">
    <citation type="journal article" date="2013" name="Genome Biol.">
        <title>Assembly of a phased diploid Candida albicans genome facilitates allele-specific measurements and provides a simple model for repeat and indel structure.</title>
        <authorList>
            <person name="Muzzey D."/>
            <person name="Schwartz K."/>
            <person name="Weissman J.S."/>
            <person name="Sherlock G."/>
        </authorList>
    </citation>
    <scope>NUCLEOTIDE SEQUENCE [LARGE SCALE GENOMIC DNA]</scope>
    <scope>GENOME REANNOTATION</scope>
    <source>
        <strain>SC5314 / ATCC MYA-2876</strain>
    </source>
</reference>
<accession>Q59NY7</accession>
<accession>A0A1D8PNQ0</accession>
<dbReference type="EMBL" id="CP017627">
    <property type="protein sequence ID" value="AOW29769.1"/>
    <property type="molecule type" value="Genomic_DNA"/>
</dbReference>
<dbReference type="RefSeq" id="XP_711420.2">
    <property type="nucleotide sequence ID" value="XM_706328.2"/>
</dbReference>
<dbReference type="SMR" id="Q59NY7"/>
<dbReference type="FunCoup" id="Q59NY7">
    <property type="interactions" value="110"/>
</dbReference>
<dbReference type="STRING" id="237561.Q59NY7"/>
<dbReference type="PeptideAtlas" id="Q59NY7"/>
<dbReference type="GeneID" id="3646976"/>
<dbReference type="KEGG" id="cal:CAALFM_C503570WA"/>
<dbReference type="eggNOG" id="ENOG502S35Z">
    <property type="taxonomic scope" value="Eukaryota"/>
</dbReference>
<dbReference type="HOGENOM" id="CLU_115919_0_0_1"/>
<dbReference type="InParanoid" id="Q59NY7"/>
<dbReference type="OrthoDB" id="3824970at2759"/>
<dbReference type="Proteomes" id="UP000000559">
    <property type="component" value="Chromosome 5"/>
</dbReference>
<dbReference type="GO" id="GO:0005789">
    <property type="term" value="C:endoplasmic reticulum membrane"/>
    <property type="evidence" value="ECO:0007669"/>
    <property type="project" value="UniProtKB-SubCell"/>
</dbReference>
<dbReference type="GO" id="GO:0043130">
    <property type="term" value="F:ubiquitin binding"/>
    <property type="evidence" value="ECO:0007669"/>
    <property type="project" value="InterPro"/>
</dbReference>
<dbReference type="CDD" id="cd14424">
    <property type="entry name" value="CUE_Cue1p_like"/>
    <property type="match status" value="1"/>
</dbReference>
<dbReference type="FunFam" id="1.10.8.10:FF:000050">
    <property type="entry name" value="Related to AMFR protein"/>
    <property type="match status" value="1"/>
</dbReference>
<dbReference type="Gene3D" id="1.10.8.10">
    <property type="entry name" value="DNA helicase RuvA subunit, C-terminal domain"/>
    <property type="match status" value="1"/>
</dbReference>
<dbReference type="InterPro" id="IPR003892">
    <property type="entry name" value="CUE"/>
</dbReference>
<dbReference type="Pfam" id="PF02845">
    <property type="entry name" value="CUE"/>
    <property type="match status" value="1"/>
</dbReference>
<dbReference type="SMART" id="SM00546">
    <property type="entry name" value="CUE"/>
    <property type="match status" value="1"/>
</dbReference>
<dbReference type="PROSITE" id="PS51140">
    <property type="entry name" value="CUE"/>
    <property type="match status" value="1"/>
</dbReference>
<dbReference type="PROSITE" id="PS00014">
    <property type="entry name" value="ER_TARGET"/>
    <property type="match status" value="1"/>
</dbReference>
<sequence>MDSSTVLFIGAVAVAFIFLKWMVSPIPPQNEFTIDHLSQDQSTGSTTSSNAHQNRDTHSISTQSHRNSRRAVSESMIEVVQSIAPMLTVEQIRYDLETTGNVEATVNRFMELGDLPFPPGYVRPQQPPTPSEEPKKQEVIGKRSVNLLEKYNIDAKNPKSDHNSLLHQRRQEMILGARKRLAAQLSNEL</sequence>
<gene>
    <name type="primary">CUE1</name>
    <name type="ordered locus">CAALFM_C503570WA</name>
    <name type="ORF">CaO19.6668</name>
</gene>
<organism>
    <name type="scientific">Candida albicans (strain SC5314 / ATCC MYA-2876)</name>
    <name type="common">Yeast</name>
    <dbReference type="NCBI Taxonomy" id="237561"/>
    <lineage>
        <taxon>Eukaryota</taxon>
        <taxon>Fungi</taxon>
        <taxon>Dikarya</taxon>
        <taxon>Ascomycota</taxon>
        <taxon>Saccharomycotina</taxon>
        <taxon>Pichiomycetes</taxon>
        <taxon>Debaryomycetaceae</taxon>
        <taxon>Candida/Lodderomyces clade</taxon>
        <taxon>Candida</taxon>
    </lineage>
</organism>
<name>CUE1_CANAL</name>
<evidence type="ECO:0000250" key="1"/>
<evidence type="ECO:0000255" key="2"/>
<evidence type="ECO:0000255" key="3">
    <source>
        <dbReference type="PROSITE-ProRule" id="PRU00468"/>
    </source>
</evidence>
<evidence type="ECO:0000255" key="4">
    <source>
        <dbReference type="PROSITE-ProRule" id="PRU10138"/>
    </source>
</evidence>
<evidence type="ECO:0000256" key="5">
    <source>
        <dbReference type="SAM" id="MobiDB-lite"/>
    </source>
</evidence>
<evidence type="ECO:0000305" key="6"/>